<comment type="function">
    <text evidence="1">Catalyzes the reduction of nitrite to ammonia, consuming six electrons in the process.</text>
</comment>
<comment type="catalytic activity">
    <reaction evidence="1">
        <text>6 Fe(III)-[cytochrome c] + NH4(+) + 2 H2O = 6 Fe(II)-[cytochrome c] + nitrite + 8 H(+)</text>
        <dbReference type="Rhea" id="RHEA:13089"/>
        <dbReference type="Rhea" id="RHEA-COMP:10350"/>
        <dbReference type="Rhea" id="RHEA-COMP:14399"/>
        <dbReference type="ChEBI" id="CHEBI:15377"/>
        <dbReference type="ChEBI" id="CHEBI:15378"/>
        <dbReference type="ChEBI" id="CHEBI:16301"/>
        <dbReference type="ChEBI" id="CHEBI:28938"/>
        <dbReference type="ChEBI" id="CHEBI:29033"/>
        <dbReference type="ChEBI" id="CHEBI:29034"/>
        <dbReference type="EC" id="1.7.2.2"/>
    </reaction>
</comment>
<comment type="cofactor">
    <cofactor evidence="1">
        <name>Ca(2+)</name>
        <dbReference type="ChEBI" id="CHEBI:29108"/>
    </cofactor>
    <text evidence="1">Binds 1 Ca(2+) ion per monomer.</text>
</comment>
<comment type="cofactor">
    <cofactor evidence="1">
        <name>heme c</name>
        <dbReference type="ChEBI" id="CHEBI:61717"/>
    </cofactor>
    <text evidence="1">Binds 5 heme c groups covalently per monomer.</text>
</comment>
<comment type="pathway">
    <text evidence="1">Nitrogen metabolism; nitrate reduction (assimilation).</text>
</comment>
<comment type="subcellular location">
    <subcellularLocation>
        <location evidence="1">Periplasm</location>
    </subcellularLocation>
</comment>
<comment type="similarity">
    <text evidence="1">Belongs to the cytochrome c-552 family.</text>
</comment>
<proteinExistence type="inferred from homology"/>
<feature type="signal peptide" evidence="1">
    <location>
        <begin position="1"/>
        <end position="27"/>
    </location>
</feature>
<feature type="chain" id="PRO_5000205001" description="Cytochrome c-552">
    <location>
        <begin position="28"/>
        <end position="467"/>
    </location>
</feature>
<feature type="binding site" description="axial binding residue" evidence="1">
    <location>
        <position position="87"/>
    </location>
    <ligand>
        <name>heme c</name>
        <dbReference type="ChEBI" id="CHEBI:61717"/>
        <label>3</label>
    </ligand>
    <ligandPart>
        <name>Fe</name>
        <dbReference type="ChEBI" id="CHEBI:18248"/>
    </ligandPart>
</feature>
<feature type="binding site" description="covalent" evidence="1">
    <location>
        <position position="115"/>
    </location>
    <ligand>
        <name>heme</name>
        <dbReference type="ChEBI" id="CHEBI:30413"/>
        <label>1</label>
    </ligand>
</feature>
<feature type="binding site" description="covalent" evidence="1">
    <location>
        <position position="118"/>
    </location>
    <ligand>
        <name>heme</name>
        <dbReference type="ChEBI" id="CHEBI:30413"/>
        <label>1</label>
    </ligand>
</feature>
<feature type="binding site" description="axial binding residue" evidence="1">
    <location>
        <position position="119"/>
    </location>
    <ligand>
        <name>heme</name>
        <dbReference type="ChEBI" id="CHEBI:30413"/>
        <label>1</label>
    </ligand>
    <ligandPart>
        <name>Fe</name>
        <dbReference type="ChEBI" id="CHEBI:18248"/>
    </ligandPart>
</feature>
<feature type="binding site" description="covalent" evidence="1">
    <location>
        <position position="153"/>
    </location>
    <ligand>
        <name>heme c</name>
        <dbReference type="ChEBI" id="CHEBI:61717"/>
        <label>2</label>
    </ligand>
</feature>
<feature type="binding site" description="covalent" evidence="1">
    <location>
        <position position="156"/>
    </location>
    <ligand>
        <name>heme c</name>
        <dbReference type="ChEBI" id="CHEBI:61717"/>
        <label>2</label>
    </ligand>
</feature>
<feature type="binding site" description="axial binding residue" evidence="1">
    <location>
        <position position="157"/>
    </location>
    <ligand>
        <name>heme c</name>
        <dbReference type="ChEBI" id="CHEBI:61717"/>
        <label>2</label>
    </ligand>
    <ligandPart>
        <name>Fe</name>
        <dbReference type="ChEBI" id="CHEBI:18248"/>
    </ligandPart>
</feature>
<feature type="binding site" description="covalent" evidence="1">
    <location>
        <position position="195"/>
    </location>
    <ligand>
        <name>heme c</name>
        <dbReference type="ChEBI" id="CHEBI:61717"/>
        <label>3</label>
    </ligand>
</feature>
<feature type="binding site" description="covalent" evidence="1">
    <location>
        <position position="198"/>
    </location>
    <ligand>
        <name>heme c</name>
        <dbReference type="ChEBI" id="CHEBI:61717"/>
        <label>3</label>
    </ligand>
</feature>
<feature type="binding site" description="axial binding residue" evidence="1">
    <location>
        <position position="199"/>
    </location>
    <ligand>
        <name>heme c</name>
        <dbReference type="ChEBI" id="CHEBI:61717"/>
        <label>3</label>
    </ligand>
    <ligandPart>
        <name>Fe</name>
        <dbReference type="ChEBI" id="CHEBI:18248"/>
    </ligandPart>
</feature>
<feature type="binding site" evidence="1">
    <location>
        <position position="201"/>
    </location>
    <ligand>
        <name>Ca(2+)</name>
        <dbReference type="ChEBI" id="CHEBI:29108"/>
    </ligand>
</feature>
<feature type="binding site" evidence="1">
    <location>
        <position position="202"/>
    </location>
    <ligand>
        <name>Ca(2+)</name>
        <dbReference type="ChEBI" id="CHEBI:29108"/>
    </ligand>
</feature>
<feature type="binding site" evidence="1">
    <location>
        <position position="202"/>
    </location>
    <ligand>
        <name>substrate</name>
    </ligand>
</feature>
<feature type="binding site" evidence="1">
    <location>
        <position position="250"/>
    </location>
    <ligand>
        <name>Ca(2+)</name>
        <dbReference type="ChEBI" id="CHEBI:29108"/>
    </ligand>
</feature>
<feature type="binding site" evidence="1">
    <location>
        <position position="252"/>
    </location>
    <ligand>
        <name>Ca(2+)</name>
        <dbReference type="ChEBI" id="CHEBI:29108"/>
    </ligand>
</feature>
<feature type="binding site" evidence="1">
    <location>
        <position position="253"/>
    </location>
    <ligand>
        <name>substrate</name>
    </ligand>
</feature>
<feature type="binding site" description="axial binding residue" evidence="1">
    <location>
        <position position="264"/>
    </location>
    <ligand>
        <name>heme c</name>
        <dbReference type="ChEBI" id="CHEBI:61717"/>
        <label>5</label>
    </ligand>
    <ligandPart>
        <name>Fe</name>
        <dbReference type="ChEBI" id="CHEBI:18248"/>
    </ligandPart>
</feature>
<feature type="binding site" description="covalent" evidence="1">
    <location>
        <position position="271"/>
    </location>
    <ligand>
        <name>heme c</name>
        <dbReference type="ChEBI" id="CHEBI:61717"/>
        <label>4</label>
    </ligand>
</feature>
<feature type="binding site" description="covalent" evidence="1">
    <location>
        <position position="274"/>
    </location>
    <ligand>
        <name>heme c</name>
        <dbReference type="ChEBI" id="CHEBI:61717"/>
        <label>4</label>
    </ligand>
</feature>
<feature type="binding site" description="axial binding residue" evidence="1">
    <location>
        <position position="275"/>
    </location>
    <ligand>
        <name>heme c</name>
        <dbReference type="ChEBI" id="CHEBI:61717"/>
        <label>4</label>
    </ligand>
    <ligandPart>
        <name>Fe</name>
        <dbReference type="ChEBI" id="CHEBI:18248"/>
    </ligandPart>
</feature>
<feature type="binding site" description="axial binding residue" evidence="1">
    <location>
        <position position="290"/>
    </location>
    <ligand>
        <name>heme c</name>
        <dbReference type="ChEBI" id="CHEBI:61717"/>
        <label>2</label>
    </ligand>
    <ligandPart>
        <name>Fe</name>
        <dbReference type="ChEBI" id="CHEBI:18248"/>
    </ligandPart>
</feature>
<feature type="binding site" description="covalent" evidence="1">
    <location>
        <position position="303"/>
    </location>
    <ligand>
        <name>heme c</name>
        <dbReference type="ChEBI" id="CHEBI:61717"/>
        <label>5</label>
    </ligand>
</feature>
<feature type="binding site" description="covalent" evidence="1">
    <location>
        <position position="306"/>
    </location>
    <ligand>
        <name>heme c</name>
        <dbReference type="ChEBI" id="CHEBI:61717"/>
        <label>5</label>
    </ligand>
</feature>
<feature type="binding site" description="axial binding residue" evidence="1">
    <location>
        <position position="307"/>
    </location>
    <ligand>
        <name>heme c</name>
        <dbReference type="ChEBI" id="CHEBI:61717"/>
        <label>5</label>
    </ligand>
    <ligandPart>
        <name>Fe</name>
        <dbReference type="ChEBI" id="CHEBI:18248"/>
    </ligandPart>
</feature>
<feature type="binding site" description="axial binding residue" evidence="1">
    <location>
        <position position="382"/>
    </location>
    <ligand>
        <name>heme c</name>
        <dbReference type="ChEBI" id="CHEBI:61717"/>
        <label>4</label>
    </ligand>
    <ligandPart>
        <name>Fe</name>
        <dbReference type="ChEBI" id="CHEBI:18248"/>
    </ligandPart>
</feature>
<protein>
    <recommendedName>
        <fullName evidence="1">Cytochrome c-552</fullName>
        <ecNumber evidence="1">1.7.2.2</ecNumber>
    </recommendedName>
    <alternativeName>
        <fullName evidence="1">Ammonia-forming cytochrome c nitrite reductase</fullName>
        <shortName evidence="1">Cytochrome c nitrite reductase</shortName>
    </alternativeName>
</protein>
<evidence type="ECO:0000255" key="1">
    <source>
        <dbReference type="HAMAP-Rule" id="MF_01182"/>
    </source>
</evidence>
<reference key="1">
    <citation type="submission" date="2006-12" db="EMBL/GenBank/DDBJ databases">
        <title>Complete sequence of Shewanella amazonensis SB2B.</title>
        <authorList>
            <consortium name="US DOE Joint Genome Institute"/>
            <person name="Copeland A."/>
            <person name="Lucas S."/>
            <person name="Lapidus A."/>
            <person name="Barry K."/>
            <person name="Detter J.C."/>
            <person name="Glavina del Rio T."/>
            <person name="Hammon N."/>
            <person name="Israni S."/>
            <person name="Dalin E."/>
            <person name="Tice H."/>
            <person name="Pitluck S."/>
            <person name="Munk A.C."/>
            <person name="Brettin T."/>
            <person name="Bruce D."/>
            <person name="Han C."/>
            <person name="Tapia R."/>
            <person name="Gilna P."/>
            <person name="Schmutz J."/>
            <person name="Larimer F."/>
            <person name="Land M."/>
            <person name="Hauser L."/>
            <person name="Kyrpides N."/>
            <person name="Mikhailova N."/>
            <person name="Fredrickson J."/>
            <person name="Richardson P."/>
        </authorList>
    </citation>
    <scope>NUCLEOTIDE SEQUENCE [LARGE SCALE GENOMIC DNA]</scope>
    <source>
        <strain>ATCC BAA-1098 / SB2B</strain>
    </source>
</reference>
<name>NRFA_SHEAM</name>
<accession>A1S3A0</accession>
<gene>
    <name evidence="1" type="primary">nrfA</name>
    <name type="ordered locus">Sama_0648</name>
</gene>
<sequence>MVKKLTGKSFALSALVAASFVAAGAMASDKTEPRNDVYKDKFSKQYNSWHATAESEAITDALEQDPALVILWAGYGFAKDYNAPRGHMYALTDVRNTLRTGAPTSAEDGPMPMACWSCKSPDVPRLIEEQGESGYFTGKWAKGGAEVANTIGCSDCHEKGTPKLRLSRPFASRAMEAIGTPFDKASKQDKESMVCAQCHVEYYFEKTDDRKGFVKFPWDGGTTVENMEVYYDAIQFADWTHAVSKTPMLKAQHPGYETWKLGTHGQNNVSCVDCHMPKVTNEQGKKFTDHKVGNPFDRFEETCGTCHSQDKEHMLTVYKDNKSKVMELKSKAEAQLVAAHFEAGAAWKAGATEDEMKPILTNIRHAQWRWDYAIASHGVSAHAPAEALRVLGTAVDKAANARVQLAQLLATKGVKQPIELPDISTKAKAQAALGMDMDKMNADKAKFKQEMLPKWEADAKAREATYK</sequence>
<organism>
    <name type="scientific">Shewanella amazonensis (strain ATCC BAA-1098 / SB2B)</name>
    <dbReference type="NCBI Taxonomy" id="326297"/>
    <lineage>
        <taxon>Bacteria</taxon>
        <taxon>Pseudomonadati</taxon>
        <taxon>Pseudomonadota</taxon>
        <taxon>Gammaproteobacteria</taxon>
        <taxon>Alteromonadales</taxon>
        <taxon>Shewanellaceae</taxon>
        <taxon>Shewanella</taxon>
    </lineage>
</organism>
<keyword id="KW-0106">Calcium</keyword>
<keyword id="KW-0249">Electron transport</keyword>
<keyword id="KW-0349">Heme</keyword>
<keyword id="KW-0408">Iron</keyword>
<keyword id="KW-0479">Metal-binding</keyword>
<keyword id="KW-0560">Oxidoreductase</keyword>
<keyword id="KW-0574">Periplasm</keyword>
<keyword id="KW-1185">Reference proteome</keyword>
<keyword id="KW-0732">Signal</keyword>
<keyword id="KW-0813">Transport</keyword>
<dbReference type="EC" id="1.7.2.2" evidence="1"/>
<dbReference type="EMBL" id="CP000507">
    <property type="protein sequence ID" value="ABL98856.1"/>
    <property type="molecule type" value="Genomic_DNA"/>
</dbReference>
<dbReference type="RefSeq" id="WP_011758766.1">
    <property type="nucleotide sequence ID" value="NC_008700.1"/>
</dbReference>
<dbReference type="SMR" id="A1S3A0"/>
<dbReference type="STRING" id="326297.Sama_0648"/>
<dbReference type="KEGG" id="saz:Sama_0648"/>
<dbReference type="eggNOG" id="COG3303">
    <property type="taxonomic scope" value="Bacteria"/>
</dbReference>
<dbReference type="HOGENOM" id="CLU_035040_1_0_6"/>
<dbReference type="OrthoDB" id="9780421at2"/>
<dbReference type="UniPathway" id="UPA00653"/>
<dbReference type="Proteomes" id="UP000009175">
    <property type="component" value="Chromosome"/>
</dbReference>
<dbReference type="GO" id="GO:0030288">
    <property type="term" value="C:outer membrane-bounded periplasmic space"/>
    <property type="evidence" value="ECO:0007669"/>
    <property type="project" value="TreeGrafter"/>
</dbReference>
<dbReference type="GO" id="GO:0005509">
    <property type="term" value="F:calcium ion binding"/>
    <property type="evidence" value="ECO:0007669"/>
    <property type="project" value="UniProtKB-UniRule"/>
</dbReference>
<dbReference type="GO" id="GO:0020037">
    <property type="term" value="F:heme binding"/>
    <property type="evidence" value="ECO:0007669"/>
    <property type="project" value="InterPro"/>
</dbReference>
<dbReference type="GO" id="GO:0005506">
    <property type="term" value="F:iron ion binding"/>
    <property type="evidence" value="ECO:0007669"/>
    <property type="project" value="UniProtKB-UniRule"/>
</dbReference>
<dbReference type="GO" id="GO:0042279">
    <property type="term" value="F:nitrite reductase (cytochrome, ammonia-forming) activity"/>
    <property type="evidence" value="ECO:0007669"/>
    <property type="project" value="UniProtKB-UniRule"/>
</dbReference>
<dbReference type="GO" id="GO:0019645">
    <property type="term" value="P:anaerobic electron transport chain"/>
    <property type="evidence" value="ECO:0007669"/>
    <property type="project" value="TreeGrafter"/>
</dbReference>
<dbReference type="GO" id="GO:0042128">
    <property type="term" value="P:nitrate assimilation"/>
    <property type="evidence" value="ECO:0007669"/>
    <property type="project" value="UniProtKB-UniRule"/>
</dbReference>
<dbReference type="CDD" id="cd00548">
    <property type="entry name" value="NrfA-like"/>
    <property type="match status" value="1"/>
</dbReference>
<dbReference type="FunFam" id="1.10.1130.10:FF:000002">
    <property type="entry name" value="Cytochrome c-552"/>
    <property type="match status" value="1"/>
</dbReference>
<dbReference type="FunFam" id="1.20.140.10:FF:000014">
    <property type="entry name" value="Cytochrome c-552"/>
    <property type="match status" value="1"/>
</dbReference>
<dbReference type="Gene3D" id="1.20.140.10">
    <property type="entry name" value="Butyryl-CoA Dehydrogenase, subunit A, domain 3"/>
    <property type="match status" value="1"/>
</dbReference>
<dbReference type="Gene3D" id="1.10.1130.10">
    <property type="entry name" value="Flavocytochrome C3, Chain A"/>
    <property type="match status" value="1"/>
</dbReference>
<dbReference type="HAMAP" id="MF_01182">
    <property type="entry name" value="Cytochrom_C552"/>
    <property type="match status" value="1"/>
</dbReference>
<dbReference type="InterPro" id="IPR003321">
    <property type="entry name" value="Cyt_c552"/>
</dbReference>
<dbReference type="InterPro" id="IPR017570">
    <property type="entry name" value="Cyt_c_NO2Rdtase_formate-dep"/>
</dbReference>
<dbReference type="InterPro" id="IPR036280">
    <property type="entry name" value="Multihaem_cyt_sf"/>
</dbReference>
<dbReference type="NCBIfam" id="TIGR03152">
    <property type="entry name" value="cyto_c552_HCOOH"/>
    <property type="match status" value="1"/>
</dbReference>
<dbReference type="NCBIfam" id="NF008339">
    <property type="entry name" value="PRK11125.1"/>
    <property type="match status" value="1"/>
</dbReference>
<dbReference type="PANTHER" id="PTHR30633:SF0">
    <property type="entry name" value="CYTOCHROME C-552"/>
    <property type="match status" value="1"/>
</dbReference>
<dbReference type="PANTHER" id="PTHR30633">
    <property type="entry name" value="CYTOCHROME C-552 RESPIRATORY NITRITE REDUCTASE"/>
    <property type="match status" value="1"/>
</dbReference>
<dbReference type="Pfam" id="PF02335">
    <property type="entry name" value="Cytochrom_C552"/>
    <property type="match status" value="1"/>
</dbReference>
<dbReference type="PIRSF" id="PIRSF000243">
    <property type="entry name" value="Cyt_c552"/>
    <property type="match status" value="1"/>
</dbReference>
<dbReference type="SUPFAM" id="SSF48695">
    <property type="entry name" value="Multiheme cytochromes"/>
    <property type="match status" value="1"/>
</dbReference>
<dbReference type="PROSITE" id="PS51008">
    <property type="entry name" value="MULTIHEME_CYTC"/>
    <property type="match status" value="1"/>
</dbReference>